<name>PDXS_STAHJ</name>
<accession>Q4L3H8</accession>
<evidence type="ECO:0000255" key="1">
    <source>
        <dbReference type="HAMAP-Rule" id="MF_01824"/>
    </source>
</evidence>
<dbReference type="EC" id="4.3.3.6" evidence="1"/>
<dbReference type="EMBL" id="AP006716">
    <property type="protein sequence ID" value="BAE05799.1"/>
    <property type="molecule type" value="Genomic_DNA"/>
</dbReference>
<dbReference type="RefSeq" id="WP_011276742.1">
    <property type="nucleotide sequence ID" value="NC_007168.1"/>
</dbReference>
<dbReference type="SMR" id="Q4L3H8"/>
<dbReference type="GeneID" id="93781704"/>
<dbReference type="KEGG" id="sha:SH2490"/>
<dbReference type="eggNOG" id="COG0214">
    <property type="taxonomic scope" value="Bacteria"/>
</dbReference>
<dbReference type="HOGENOM" id="CLU_055352_1_0_9"/>
<dbReference type="OrthoDB" id="9772545at2"/>
<dbReference type="UniPathway" id="UPA00245"/>
<dbReference type="Proteomes" id="UP000000543">
    <property type="component" value="Chromosome"/>
</dbReference>
<dbReference type="GO" id="GO:0036381">
    <property type="term" value="F:pyridoxal 5'-phosphate synthase (glutamine hydrolysing) activity"/>
    <property type="evidence" value="ECO:0007669"/>
    <property type="project" value="UniProtKB-UniRule"/>
</dbReference>
<dbReference type="GO" id="GO:0006520">
    <property type="term" value="P:amino acid metabolic process"/>
    <property type="evidence" value="ECO:0007669"/>
    <property type="project" value="TreeGrafter"/>
</dbReference>
<dbReference type="GO" id="GO:0042823">
    <property type="term" value="P:pyridoxal phosphate biosynthetic process"/>
    <property type="evidence" value="ECO:0007669"/>
    <property type="project" value="UniProtKB-UniRule"/>
</dbReference>
<dbReference type="GO" id="GO:0008615">
    <property type="term" value="P:pyridoxine biosynthetic process"/>
    <property type="evidence" value="ECO:0007669"/>
    <property type="project" value="TreeGrafter"/>
</dbReference>
<dbReference type="CDD" id="cd04727">
    <property type="entry name" value="pdxS"/>
    <property type="match status" value="1"/>
</dbReference>
<dbReference type="FunFam" id="3.20.20.70:FF:000001">
    <property type="entry name" value="Pyridoxine biosynthesis protein PDX1"/>
    <property type="match status" value="1"/>
</dbReference>
<dbReference type="Gene3D" id="3.20.20.70">
    <property type="entry name" value="Aldolase class I"/>
    <property type="match status" value="1"/>
</dbReference>
<dbReference type="HAMAP" id="MF_01824">
    <property type="entry name" value="PdxS"/>
    <property type="match status" value="1"/>
</dbReference>
<dbReference type="InterPro" id="IPR013785">
    <property type="entry name" value="Aldolase_TIM"/>
</dbReference>
<dbReference type="InterPro" id="IPR001852">
    <property type="entry name" value="PdxS/SNZ"/>
</dbReference>
<dbReference type="InterPro" id="IPR033755">
    <property type="entry name" value="PdxS/SNZ_N"/>
</dbReference>
<dbReference type="InterPro" id="IPR011060">
    <property type="entry name" value="RibuloseP-bd_barrel"/>
</dbReference>
<dbReference type="NCBIfam" id="NF003215">
    <property type="entry name" value="PRK04180.1"/>
    <property type="match status" value="1"/>
</dbReference>
<dbReference type="NCBIfam" id="TIGR00343">
    <property type="entry name" value="pyridoxal 5'-phosphate synthase lyase subunit PdxS"/>
    <property type="match status" value="1"/>
</dbReference>
<dbReference type="PANTHER" id="PTHR31829">
    <property type="entry name" value="PYRIDOXAL 5'-PHOSPHATE SYNTHASE SUBUNIT SNZ1-RELATED"/>
    <property type="match status" value="1"/>
</dbReference>
<dbReference type="PANTHER" id="PTHR31829:SF0">
    <property type="entry name" value="PYRIDOXAL 5'-PHOSPHATE SYNTHASE SUBUNIT SNZ1-RELATED"/>
    <property type="match status" value="1"/>
</dbReference>
<dbReference type="Pfam" id="PF01680">
    <property type="entry name" value="SOR_SNZ"/>
    <property type="match status" value="1"/>
</dbReference>
<dbReference type="PIRSF" id="PIRSF029271">
    <property type="entry name" value="Pdx1"/>
    <property type="match status" value="1"/>
</dbReference>
<dbReference type="SUPFAM" id="SSF51366">
    <property type="entry name" value="Ribulose-phoshate binding barrel"/>
    <property type="match status" value="1"/>
</dbReference>
<dbReference type="PROSITE" id="PS01235">
    <property type="entry name" value="PDXS_SNZ_1"/>
    <property type="match status" value="1"/>
</dbReference>
<dbReference type="PROSITE" id="PS51129">
    <property type="entry name" value="PDXS_SNZ_2"/>
    <property type="match status" value="1"/>
</dbReference>
<feature type="chain" id="PRO_1000070398" description="Pyridoxal 5'-phosphate synthase subunit PdxS">
    <location>
        <begin position="1"/>
        <end position="295"/>
    </location>
</feature>
<feature type="active site" description="Schiff-base intermediate with D-ribose 5-phosphate" evidence="1">
    <location>
        <position position="82"/>
    </location>
</feature>
<feature type="binding site" evidence="1">
    <location>
        <position position="25"/>
    </location>
    <ligand>
        <name>D-ribose 5-phosphate</name>
        <dbReference type="ChEBI" id="CHEBI:78346"/>
    </ligand>
</feature>
<feature type="binding site" evidence="1">
    <location>
        <position position="154"/>
    </location>
    <ligand>
        <name>D-ribose 5-phosphate</name>
        <dbReference type="ChEBI" id="CHEBI:78346"/>
    </ligand>
</feature>
<feature type="binding site" evidence="1">
    <location>
        <position position="166"/>
    </location>
    <ligand>
        <name>D-glyceraldehyde 3-phosphate</name>
        <dbReference type="ChEBI" id="CHEBI:59776"/>
    </ligand>
</feature>
<feature type="binding site" evidence="1">
    <location>
        <position position="215"/>
    </location>
    <ligand>
        <name>D-ribose 5-phosphate</name>
        <dbReference type="ChEBI" id="CHEBI:78346"/>
    </ligand>
</feature>
<feature type="binding site" evidence="1">
    <location>
        <begin position="236"/>
        <end position="237"/>
    </location>
    <ligand>
        <name>D-ribose 5-phosphate</name>
        <dbReference type="ChEBI" id="CHEBI:78346"/>
    </ligand>
</feature>
<proteinExistence type="inferred from homology"/>
<sequence>MSKIVGSDRVKRGMAEMQKGGVIMDVVNAEQAKIAEEAGAVAVMALERVPSDIRAAGGVARSANPKIVEEVMNAVSIPVMAKARIGHITEARVLEAMGVDYIDESEVLTPADEEYHLRKDQFTVPFVCGCRNLGEAARRIGEGAAMLRTKGEPGTGNIVEAVRHMRKVNSEVSRLVVMNDDEIMTYAKELGAPYEVLKQIKDHGRLPVVNFAAGGVATPQDAALMMELGADGVFVGSGIFKSEDPEKFAKAIVQATTHYQDYELIGKLASELGTAMKGLDINQISLEERMQERGW</sequence>
<organism>
    <name type="scientific">Staphylococcus haemolyticus (strain JCSC1435)</name>
    <dbReference type="NCBI Taxonomy" id="279808"/>
    <lineage>
        <taxon>Bacteria</taxon>
        <taxon>Bacillati</taxon>
        <taxon>Bacillota</taxon>
        <taxon>Bacilli</taxon>
        <taxon>Bacillales</taxon>
        <taxon>Staphylococcaceae</taxon>
        <taxon>Staphylococcus</taxon>
    </lineage>
</organism>
<reference key="1">
    <citation type="journal article" date="2005" name="J. Bacteriol.">
        <title>Whole-genome sequencing of Staphylococcus haemolyticus uncovers the extreme plasticity of its genome and the evolution of human-colonizing staphylococcal species.</title>
        <authorList>
            <person name="Takeuchi F."/>
            <person name="Watanabe S."/>
            <person name="Baba T."/>
            <person name="Yuzawa H."/>
            <person name="Ito T."/>
            <person name="Morimoto Y."/>
            <person name="Kuroda M."/>
            <person name="Cui L."/>
            <person name="Takahashi M."/>
            <person name="Ankai A."/>
            <person name="Baba S."/>
            <person name="Fukui S."/>
            <person name="Lee J.C."/>
            <person name="Hiramatsu K."/>
        </authorList>
    </citation>
    <scope>NUCLEOTIDE SEQUENCE [LARGE SCALE GENOMIC DNA]</scope>
    <source>
        <strain>JCSC1435</strain>
    </source>
</reference>
<keyword id="KW-0456">Lyase</keyword>
<keyword id="KW-0663">Pyridoxal phosphate</keyword>
<keyword id="KW-0704">Schiff base</keyword>
<gene>
    <name evidence="1" type="primary">pdxS</name>
    <name type="ordered locus">SH2490</name>
</gene>
<protein>
    <recommendedName>
        <fullName evidence="1">Pyridoxal 5'-phosphate synthase subunit PdxS</fullName>
        <shortName evidence="1">PLP synthase subunit PdxS</shortName>
        <ecNumber evidence="1">4.3.3.6</ecNumber>
    </recommendedName>
    <alternativeName>
        <fullName evidence="1">Pdx1</fullName>
    </alternativeName>
</protein>
<comment type="function">
    <text evidence="1">Catalyzes the formation of pyridoxal 5'-phosphate from ribose 5-phosphate (RBP), glyceraldehyde 3-phosphate (G3P) and ammonia. The ammonia is provided by the PdxT subunit. Can also use ribulose 5-phosphate and dihydroxyacetone phosphate as substrates, resulting from enzyme-catalyzed isomerization of RBP and G3P, respectively.</text>
</comment>
<comment type="catalytic activity">
    <reaction evidence="1">
        <text>aldehydo-D-ribose 5-phosphate + D-glyceraldehyde 3-phosphate + L-glutamine = pyridoxal 5'-phosphate + L-glutamate + phosphate + 3 H2O + H(+)</text>
        <dbReference type="Rhea" id="RHEA:31507"/>
        <dbReference type="ChEBI" id="CHEBI:15377"/>
        <dbReference type="ChEBI" id="CHEBI:15378"/>
        <dbReference type="ChEBI" id="CHEBI:29985"/>
        <dbReference type="ChEBI" id="CHEBI:43474"/>
        <dbReference type="ChEBI" id="CHEBI:58273"/>
        <dbReference type="ChEBI" id="CHEBI:58359"/>
        <dbReference type="ChEBI" id="CHEBI:59776"/>
        <dbReference type="ChEBI" id="CHEBI:597326"/>
        <dbReference type="EC" id="4.3.3.6"/>
    </reaction>
</comment>
<comment type="pathway">
    <text evidence="1">Cofactor biosynthesis; pyridoxal 5'-phosphate biosynthesis.</text>
</comment>
<comment type="subunit">
    <text evidence="1">In the presence of PdxT, forms a dodecamer of heterodimers.</text>
</comment>
<comment type="similarity">
    <text evidence="1">Belongs to the PdxS/SNZ family.</text>
</comment>